<protein>
    <recommendedName>
        <fullName evidence="1">Protein translocase subunit SecA</fullName>
        <ecNumber evidence="1">7.4.2.8</ecNumber>
    </recommendedName>
</protein>
<accession>Q0HE90</accession>
<name>SECA_SHESM</name>
<keyword id="KW-0067">ATP-binding</keyword>
<keyword id="KW-0997">Cell inner membrane</keyword>
<keyword id="KW-1003">Cell membrane</keyword>
<keyword id="KW-0963">Cytoplasm</keyword>
<keyword id="KW-0472">Membrane</keyword>
<keyword id="KW-0479">Metal-binding</keyword>
<keyword id="KW-0547">Nucleotide-binding</keyword>
<keyword id="KW-0653">Protein transport</keyword>
<keyword id="KW-1278">Translocase</keyword>
<keyword id="KW-0811">Translocation</keyword>
<keyword id="KW-0813">Transport</keyword>
<keyword id="KW-0862">Zinc</keyword>
<evidence type="ECO:0000255" key="1">
    <source>
        <dbReference type="HAMAP-Rule" id="MF_01382"/>
    </source>
</evidence>
<evidence type="ECO:0000256" key="2">
    <source>
        <dbReference type="SAM" id="MobiDB-lite"/>
    </source>
</evidence>
<sequence>MFGKLLTKVFGSRNDRTLKGLQKVVNKINALEADYEKLTDEQLKAKTAEFRERLAAGASLESIMAEAFATVREASKRVFEMRHFDVQLLGGMVLDSNRIAEMRTGEGKTLTATLPAYLNALTGKGVHVITVNDYLARRDAENNRPLFEFLGLTVGINVAGLGQQAKKDAYNADITYGTNNEFGFDYLRDNMAFSPQERVQRPLHYALIDEVDSILIDEARTPLIISGAAEDSSELYIKINTLIPNLIRQDKEDSEEYVGEGDYSIDEKAKQVHFTERGQEKVENLLIERGMLAEGDSLYSAANISLLHHVNAALRAHTLFERDVDYIVQDGEVIIVDEHTGRTMPGRRWSEGLHQAVEAKEGVRIQNENQTLASITFQNYFRLYEKLAGMTGTADTEAFEFQHIYGLDTVVVPTNRPMVRKDMADLVYLTANEKYQAIIKDIKDCRERGQPVLVGTVSIEQSELLARLMVKEKIPHQVLNAKFHEKEAEIVAQAGRTGAVTIATNMAGRGTDIVLGGNWNMEIEALENPTAEQKAKIKADWQERHDAVVAAGGLHILGTERHESRRIDNQLRGRAGRQGDAGSSRFYLSMEDSLMRIFASDRVSGMMKKLGMEEGEAIEHPWVSRAIENAQRKVEARNFDIRKQLLEFDDVANDQRQVVYAQRNELMDAESIEDTIKNIQDDVISAVIDQYIPPQSVEELWDVPGLEQRLQQEFMLKLPIQEWLDKEDDLHEETLRERIITSWSDAYKAKEEMVGAPVLRQFEKAVMLQTLDGLWKEHLAAMDHLRQGIHLRGYAQKNPKQEYKRESFELFQQLLSTLKHDVISVLSKVQVQAQSDVEEMEARRREEDAKIQRDYQHAAAEALVGGDDGSDEMMAHTPMIRDGDKVGRNDPCPCGSGRKYKQCHGKLS</sequence>
<comment type="function">
    <text evidence="1">Part of the Sec protein translocase complex. Interacts with the SecYEG preprotein conducting channel. Has a central role in coupling the hydrolysis of ATP to the transfer of proteins into and across the cell membrane, serving both as a receptor for the preprotein-SecB complex and as an ATP-driven molecular motor driving the stepwise translocation of polypeptide chains across the membrane.</text>
</comment>
<comment type="catalytic activity">
    <reaction evidence="1">
        <text>ATP + H2O + cellular proteinSide 1 = ADP + phosphate + cellular proteinSide 2.</text>
        <dbReference type="EC" id="7.4.2.8"/>
    </reaction>
</comment>
<comment type="cofactor">
    <cofactor evidence="1">
        <name>Zn(2+)</name>
        <dbReference type="ChEBI" id="CHEBI:29105"/>
    </cofactor>
    <text evidence="1">May bind 1 zinc ion per subunit.</text>
</comment>
<comment type="subunit">
    <text evidence="1">Monomer and homodimer. Part of the essential Sec protein translocation apparatus which comprises SecA, SecYEG and auxiliary proteins SecDF-YajC and YidC.</text>
</comment>
<comment type="subcellular location">
    <subcellularLocation>
        <location evidence="1">Cell inner membrane</location>
        <topology evidence="1">Peripheral membrane protein</topology>
        <orientation evidence="1">Cytoplasmic side</orientation>
    </subcellularLocation>
    <subcellularLocation>
        <location evidence="1">Cytoplasm</location>
    </subcellularLocation>
    <text evidence="1">Distribution is 50-50.</text>
</comment>
<comment type="similarity">
    <text evidence="1">Belongs to the SecA family.</text>
</comment>
<organism>
    <name type="scientific">Shewanella sp. (strain MR-4)</name>
    <dbReference type="NCBI Taxonomy" id="60480"/>
    <lineage>
        <taxon>Bacteria</taxon>
        <taxon>Pseudomonadati</taxon>
        <taxon>Pseudomonadota</taxon>
        <taxon>Gammaproteobacteria</taxon>
        <taxon>Alteromonadales</taxon>
        <taxon>Shewanellaceae</taxon>
        <taxon>Shewanella</taxon>
    </lineage>
</organism>
<proteinExistence type="inferred from homology"/>
<reference key="1">
    <citation type="submission" date="2006-08" db="EMBL/GenBank/DDBJ databases">
        <title>Complete sequence of Shewanella sp. MR-4.</title>
        <authorList>
            <consortium name="US DOE Joint Genome Institute"/>
            <person name="Copeland A."/>
            <person name="Lucas S."/>
            <person name="Lapidus A."/>
            <person name="Barry K."/>
            <person name="Detter J.C."/>
            <person name="Glavina del Rio T."/>
            <person name="Hammon N."/>
            <person name="Israni S."/>
            <person name="Dalin E."/>
            <person name="Tice H."/>
            <person name="Pitluck S."/>
            <person name="Kiss H."/>
            <person name="Brettin T."/>
            <person name="Bruce D."/>
            <person name="Han C."/>
            <person name="Tapia R."/>
            <person name="Gilna P."/>
            <person name="Schmutz J."/>
            <person name="Larimer F."/>
            <person name="Land M."/>
            <person name="Hauser L."/>
            <person name="Kyrpides N."/>
            <person name="Mikhailova N."/>
            <person name="Nealson K."/>
            <person name="Konstantinidis K."/>
            <person name="Klappenbach J."/>
            <person name="Tiedje J."/>
            <person name="Richardson P."/>
        </authorList>
    </citation>
    <scope>NUCLEOTIDE SEQUENCE [LARGE SCALE GENOMIC DNA]</scope>
    <source>
        <strain>MR-4</strain>
    </source>
</reference>
<gene>
    <name evidence="1" type="primary">secA</name>
    <name type="ordered locus">Shewmr4_3562</name>
</gene>
<dbReference type="EC" id="7.4.2.8" evidence="1"/>
<dbReference type="EMBL" id="CP000446">
    <property type="protein sequence ID" value="ABI40627.1"/>
    <property type="molecule type" value="Genomic_DNA"/>
</dbReference>
<dbReference type="RefSeq" id="WP_011624291.1">
    <property type="nucleotide sequence ID" value="NC_008321.1"/>
</dbReference>
<dbReference type="SMR" id="Q0HE90"/>
<dbReference type="KEGG" id="she:Shewmr4_3562"/>
<dbReference type="HOGENOM" id="CLU_005314_3_0_6"/>
<dbReference type="GO" id="GO:0031522">
    <property type="term" value="C:cell envelope Sec protein transport complex"/>
    <property type="evidence" value="ECO:0007669"/>
    <property type="project" value="TreeGrafter"/>
</dbReference>
<dbReference type="GO" id="GO:0005829">
    <property type="term" value="C:cytosol"/>
    <property type="evidence" value="ECO:0007669"/>
    <property type="project" value="TreeGrafter"/>
</dbReference>
<dbReference type="GO" id="GO:0005886">
    <property type="term" value="C:plasma membrane"/>
    <property type="evidence" value="ECO:0007669"/>
    <property type="project" value="UniProtKB-SubCell"/>
</dbReference>
<dbReference type="GO" id="GO:0005524">
    <property type="term" value="F:ATP binding"/>
    <property type="evidence" value="ECO:0007669"/>
    <property type="project" value="UniProtKB-UniRule"/>
</dbReference>
<dbReference type="GO" id="GO:0046872">
    <property type="term" value="F:metal ion binding"/>
    <property type="evidence" value="ECO:0007669"/>
    <property type="project" value="UniProtKB-KW"/>
</dbReference>
<dbReference type="GO" id="GO:0008564">
    <property type="term" value="F:protein-exporting ATPase activity"/>
    <property type="evidence" value="ECO:0007669"/>
    <property type="project" value="UniProtKB-EC"/>
</dbReference>
<dbReference type="GO" id="GO:0065002">
    <property type="term" value="P:intracellular protein transmembrane transport"/>
    <property type="evidence" value="ECO:0007669"/>
    <property type="project" value="UniProtKB-UniRule"/>
</dbReference>
<dbReference type="GO" id="GO:0017038">
    <property type="term" value="P:protein import"/>
    <property type="evidence" value="ECO:0007669"/>
    <property type="project" value="InterPro"/>
</dbReference>
<dbReference type="GO" id="GO:0006605">
    <property type="term" value="P:protein targeting"/>
    <property type="evidence" value="ECO:0007669"/>
    <property type="project" value="UniProtKB-UniRule"/>
</dbReference>
<dbReference type="GO" id="GO:0043952">
    <property type="term" value="P:protein transport by the Sec complex"/>
    <property type="evidence" value="ECO:0007669"/>
    <property type="project" value="TreeGrafter"/>
</dbReference>
<dbReference type="CDD" id="cd17928">
    <property type="entry name" value="DEXDc_SecA"/>
    <property type="match status" value="1"/>
</dbReference>
<dbReference type="CDD" id="cd18803">
    <property type="entry name" value="SF2_C_secA"/>
    <property type="match status" value="1"/>
</dbReference>
<dbReference type="FunFam" id="1.10.3060.10:FF:000001">
    <property type="entry name" value="Preprotein translocase subunit SecA"/>
    <property type="match status" value="1"/>
</dbReference>
<dbReference type="FunFam" id="3.40.50.300:FF:000081">
    <property type="entry name" value="Preprotein translocase subunit SecA"/>
    <property type="match status" value="1"/>
</dbReference>
<dbReference type="FunFam" id="3.40.50.300:FF:000113">
    <property type="entry name" value="Preprotein translocase subunit SecA"/>
    <property type="match status" value="1"/>
</dbReference>
<dbReference type="FunFam" id="3.90.1440.10:FF:000001">
    <property type="entry name" value="Preprotein translocase subunit SecA"/>
    <property type="match status" value="1"/>
</dbReference>
<dbReference type="Gene3D" id="1.10.3060.10">
    <property type="entry name" value="Helical scaffold and wing domains of SecA"/>
    <property type="match status" value="1"/>
</dbReference>
<dbReference type="Gene3D" id="3.40.50.300">
    <property type="entry name" value="P-loop containing nucleotide triphosphate hydrolases"/>
    <property type="match status" value="2"/>
</dbReference>
<dbReference type="Gene3D" id="3.90.1440.10">
    <property type="entry name" value="SecA, preprotein cross-linking domain"/>
    <property type="match status" value="1"/>
</dbReference>
<dbReference type="HAMAP" id="MF_01382">
    <property type="entry name" value="SecA"/>
    <property type="match status" value="1"/>
</dbReference>
<dbReference type="InterPro" id="IPR014001">
    <property type="entry name" value="Helicase_ATP-bd"/>
</dbReference>
<dbReference type="InterPro" id="IPR001650">
    <property type="entry name" value="Helicase_C-like"/>
</dbReference>
<dbReference type="InterPro" id="IPR027417">
    <property type="entry name" value="P-loop_NTPase"/>
</dbReference>
<dbReference type="InterPro" id="IPR004027">
    <property type="entry name" value="SEC_C_motif"/>
</dbReference>
<dbReference type="InterPro" id="IPR000185">
    <property type="entry name" value="SecA"/>
</dbReference>
<dbReference type="InterPro" id="IPR020937">
    <property type="entry name" value="SecA_CS"/>
</dbReference>
<dbReference type="InterPro" id="IPR011115">
    <property type="entry name" value="SecA_DEAD"/>
</dbReference>
<dbReference type="InterPro" id="IPR014018">
    <property type="entry name" value="SecA_motor_DEAD"/>
</dbReference>
<dbReference type="InterPro" id="IPR011130">
    <property type="entry name" value="SecA_preprotein_X-link_dom"/>
</dbReference>
<dbReference type="InterPro" id="IPR044722">
    <property type="entry name" value="SecA_SF2_C"/>
</dbReference>
<dbReference type="InterPro" id="IPR011116">
    <property type="entry name" value="SecA_Wing/Scaffold"/>
</dbReference>
<dbReference type="InterPro" id="IPR036266">
    <property type="entry name" value="SecA_Wing/Scaffold_sf"/>
</dbReference>
<dbReference type="InterPro" id="IPR036670">
    <property type="entry name" value="SecA_X-link_sf"/>
</dbReference>
<dbReference type="NCBIfam" id="NF009538">
    <property type="entry name" value="PRK12904.1"/>
    <property type="match status" value="1"/>
</dbReference>
<dbReference type="NCBIfam" id="TIGR00963">
    <property type="entry name" value="secA"/>
    <property type="match status" value="1"/>
</dbReference>
<dbReference type="PANTHER" id="PTHR30612:SF0">
    <property type="entry name" value="CHLOROPLAST PROTEIN-TRANSPORTING ATPASE"/>
    <property type="match status" value="1"/>
</dbReference>
<dbReference type="PANTHER" id="PTHR30612">
    <property type="entry name" value="SECA INNER MEMBRANE COMPONENT OF SEC PROTEIN SECRETION SYSTEM"/>
    <property type="match status" value="1"/>
</dbReference>
<dbReference type="Pfam" id="PF21090">
    <property type="entry name" value="P-loop_SecA"/>
    <property type="match status" value="1"/>
</dbReference>
<dbReference type="Pfam" id="PF02810">
    <property type="entry name" value="SEC-C"/>
    <property type="match status" value="1"/>
</dbReference>
<dbReference type="Pfam" id="PF07517">
    <property type="entry name" value="SecA_DEAD"/>
    <property type="match status" value="1"/>
</dbReference>
<dbReference type="Pfam" id="PF01043">
    <property type="entry name" value="SecA_PP_bind"/>
    <property type="match status" value="1"/>
</dbReference>
<dbReference type="Pfam" id="PF07516">
    <property type="entry name" value="SecA_SW"/>
    <property type="match status" value="1"/>
</dbReference>
<dbReference type="PRINTS" id="PR00906">
    <property type="entry name" value="SECA"/>
</dbReference>
<dbReference type="SMART" id="SM00957">
    <property type="entry name" value="SecA_DEAD"/>
    <property type="match status" value="1"/>
</dbReference>
<dbReference type="SMART" id="SM00958">
    <property type="entry name" value="SecA_PP_bind"/>
    <property type="match status" value="1"/>
</dbReference>
<dbReference type="SUPFAM" id="SSF81886">
    <property type="entry name" value="Helical scaffold and wing domains of SecA"/>
    <property type="match status" value="1"/>
</dbReference>
<dbReference type="SUPFAM" id="SSF52540">
    <property type="entry name" value="P-loop containing nucleoside triphosphate hydrolases"/>
    <property type="match status" value="2"/>
</dbReference>
<dbReference type="SUPFAM" id="SSF81767">
    <property type="entry name" value="Pre-protein crosslinking domain of SecA"/>
    <property type="match status" value="1"/>
</dbReference>
<dbReference type="PROSITE" id="PS01312">
    <property type="entry name" value="SECA"/>
    <property type="match status" value="1"/>
</dbReference>
<dbReference type="PROSITE" id="PS51196">
    <property type="entry name" value="SECA_MOTOR_DEAD"/>
    <property type="match status" value="1"/>
</dbReference>
<feature type="chain" id="PRO_0000320998" description="Protein translocase subunit SecA">
    <location>
        <begin position="1"/>
        <end position="908"/>
    </location>
</feature>
<feature type="region of interest" description="Disordered" evidence="2">
    <location>
        <begin position="865"/>
        <end position="908"/>
    </location>
</feature>
<feature type="compositionally biased region" description="Basic and acidic residues" evidence="2">
    <location>
        <begin position="879"/>
        <end position="888"/>
    </location>
</feature>
<feature type="compositionally biased region" description="Basic residues" evidence="2">
    <location>
        <begin position="898"/>
        <end position="908"/>
    </location>
</feature>
<feature type="binding site" evidence="1">
    <location>
        <position position="87"/>
    </location>
    <ligand>
        <name>ATP</name>
        <dbReference type="ChEBI" id="CHEBI:30616"/>
    </ligand>
</feature>
<feature type="binding site" evidence="1">
    <location>
        <begin position="105"/>
        <end position="109"/>
    </location>
    <ligand>
        <name>ATP</name>
        <dbReference type="ChEBI" id="CHEBI:30616"/>
    </ligand>
</feature>
<feature type="binding site" evidence="1">
    <location>
        <position position="512"/>
    </location>
    <ligand>
        <name>ATP</name>
        <dbReference type="ChEBI" id="CHEBI:30616"/>
    </ligand>
</feature>
<feature type="binding site" evidence="1">
    <location>
        <position position="892"/>
    </location>
    <ligand>
        <name>Zn(2+)</name>
        <dbReference type="ChEBI" id="CHEBI:29105"/>
    </ligand>
</feature>
<feature type="binding site" evidence="1">
    <location>
        <position position="894"/>
    </location>
    <ligand>
        <name>Zn(2+)</name>
        <dbReference type="ChEBI" id="CHEBI:29105"/>
    </ligand>
</feature>
<feature type="binding site" evidence="1">
    <location>
        <position position="903"/>
    </location>
    <ligand>
        <name>Zn(2+)</name>
        <dbReference type="ChEBI" id="CHEBI:29105"/>
    </ligand>
</feature>
<feature type="binding site" evidence="1">
    <location>
        <position position="904"/>
    </location>
    <ligand>
        <name>Zn(2+)</name>
        <dbReference type="ChEBI" id="CHEBI:29105"/>
    </ligand>
</feature>